<gene>
    <name type="ordered locus">LJ_0483</name>
</gene>
<feature type="chain" id="PRO_0000178178" description="dITP/XTP pyrophosphatase">
    <location>
        <begin position="1"/>
        <end position="207"/>
    </location>
</feature>
<feature type="active site" description="Proton acceptor" evidence="1">
    <location>
        <position position="72"/>
    </location>
</feature>
<feature type="binding site" evidence="1">
    <location>
        <begin position="8"/>
        <end position="13"/>
    </location>
    <ligand>
        <name>substrate</name>
    </ligand>
</feature>
<feature type="binding site" evidence="1">
    <location>
        <position position="72"/>
    </location>
    <ligand>
        <name>Mg(2+)</name>
        <dbReference type="ChEBI" id="CHEBI:18420"/>
    </ligand>
</feature>
<feature type="binding site" evidence="1">
    <location>
        <position position="73"/>
    </location>
    <ligand>
        <name>substrate</name>
    </ligand>
</feature>
<feature type="binding site" evidence="1">
    <location>
        <begin position="157"/>
        <end position="160"/>
    </location>
    <ligand>
        <name>substrate</name>
    </ligand>
</feature>
<feature type="binding site" evidence="1">
    <location>
        <position position="180"/>
    </location>
    <ligand>
        <name>substrate</name>
    </ligand>
</feature>
<feature type="binding site" evidence="1">
    <location>
        <begin position="185"/>
        <end position="186"/>
    </location>
    <ligand>
        <name>substrate</name>
    </ligand>
</feature>
<proteinExistence type="inferred from homology"/>
<accession>Q74KU4</accession>
<name>IXTPA_LACJO</name>
<comment type="function">
    <text evidence="1">Pyrophosphatase that catalyzes the hydrolysis of nucleoside triphosphates to their monophosphate derivatives, with a high preference for the non-canonical purine nucleotides XTP (xanthosine triphosphate), dITP (deoxyinosine triphosphate) and ITP. Seems to function as a house-cleaning enzyme that removes non-canonical purine nucleotides from the nucleotide pool, thus preventing their incorporation into DNA/RNA and avoiding chromosomal lesions.</text>
</comment>
<comment type="catalytic activity">
    <reaction evidence="1">
        <text>XTP + H2O = XMP + diphosphate + H(+)</text>
        <dbReference type="Rhea" id="RHEA:28610"/>
        <dbReference type="ChEBI" id="CHEBI:15377"/>
        <dbReference type="ChEBI" id="CHEBI:15378"/>
        <dbReference type="ChEBI" id="CHEBI:33019"/>
        <dbReference type="ChEBI" id="CHEBI:57464"/>
        <dbReference type="ChEBI" id="CHEBI:61314"/>
        <dbReference type="EC" id="3.6.1.66"/>
    </reaction>
</comment>
<comment type="catalytic activity">
    <reaction evidence="1">
        <text>dITP + H2O = dIMP + diphosphate + H(+)</text>
        <dbReference type="Rhea" id="RHEA:28342"/>
        <dbReference type="ChEBI" id="CHEBI:15377"/>
        <dbReference type="ChEBI" id="CHEBI:15378"/>
        <dbReference type="ChEBI" id="CHEBI:33019"/>
        <dbReference type="ChEBI" id="CHEBI:61194"/>
        <dbReference type="ChEBI" id="CHEBI:61382"/>
        <dbReference type="EC" id="3.6.1.66"/>
    </reaction>
</comment>
<comment type="catalytic activity">
    <reaction evidence="1">
        <text>ITP + H2O = IMP + diphosphate + H(+)</text>
        <dbReference type="Rhea" id="RHEA:29399"/>
        <dbReference type="ChEBI" id="CHEBI:15377"/>
        <dbReference type="ChEBI" id="CHEBI:15378"/>
        <dbReference type="ChEBI" id="CHEBI:33019"/>
        <dbReference type="ChEBI" id="CHEBI:58053"/>
        <dbReference type="ChEBI" id="CHEBI:61402"/>
        <dbReference type="EC" id="3.6.1.66"/>
    </reaction>
</comment>
<comment type="cofactor">
    <cofactor evidence="1">
        <name>Mg(2+)</name>
        <dbReference type="ChEBI" id="CHEBI:18420"/>
    </cofactor>
    <text evidence="1">Binds 1 Mg(2+) ion per subunit.</text>
</comment>
<comment type="subunit">
    <text evidence="1">Homodimer.</text>
</comment>
<comment type="similarity">
    <text evidence="1">Belongs to the HAM1 NTPase family.</text>
</comment>
<keyword id="KW-0378">Hydrolase</keyword>
<keyword id="KW-0460">Magnesium</keyword>
<keyword id="KW-0479">Metal-binding</keyword>
<keyword id="KW-0546">Nucleotide metabolism</keyword>
<keyword id="KW-0547">Nucleotide-binding</keyword>
<sequence length="207" mass="23000">MDTLLFATNNKNKAREVEEALKKINFPIHVITNQDLTDPPHVLETGTTFLANAKLKAHKMAEFSNLPTLADDSGLSVDKLNGAPGVHSARYGGEAHNDALNNAKLLAELGGVPREKRQATFHTTMVVSWPGRFDDDLVTQGEIRGEILTYPRGDGDFGYDPLFFVPDKGKTFAEMTVDEKNAISHRGQALRKLLAELPTWWKKMENE</sequence>
<evidence type="ECO:0000255" key="1">
    <source>
        <dbReference type="HAMAP-Rule" id="MF_01405"/>
    </source>
</evidence>
<protein>
    <recommendedName>
        <fullName evidence="1">dITP/XTP pyrophosphatase</fullName>
        <ecNumber evidence="1">3.6.1.66</ecNumber>
    </recommendedName>
    <alternativeName>
        <fullName evidence="1">Non-canonical purine NTP pyrophosphatase</fullName>
    </alternativeName>
    <alternativeName>
        <fullName evidence="1">Non-standard purine NTP pyrophosphatase</fullName>
    </alternativeName>
    <alternativeName>
        <fullName evidence="1">Nucleoside-triphosphate diphosphatase</fullName>
    </alternativeName>
    <alternativeName>
        <fullName evidence="1">Nucleoside-triphosphate pyrophosphatase</fullName>
        <shortName evidence="1">NTPase</shortName>
    </alternativeName>
</protein>
<organism>
    <name type="scientific">Lactobacillus johnsonii (strain CNCM I-12250 / La1 / NCC 533)</name>
    <dbReference type="NCBI Taxonomy" id="257314"/>
    <lineage>
        <taxon>Bacteria</taxon>
        <taxon>Bacillati</taxon>
        <taxon>Bacillota</taxon>
        <taxon>Bacilli</taxon>
        <taxon>Lactobacillales</taxon>
        <taxon>Lactobacillaceae</taxon>
        <taxon>Lactobacillus</taxon>
    </lineage>
</organism>
<dbReference type="EC" id="3.6.1.66" evidence="1"/>
<dbReference type="EMBL" id="AE017198">
    <property type="protein sequence ID" value="AAS08475.1"/>
    <property type="molecule type" value="Genomic_DNA"/>
</dbReference>
<dbReference type="RefSeq" id="WP_004896798.1">
    <property type="nucleotide sequence ID" value="NC_005362.1"/>
</dbReference>
<dbReference type="SMR" id="Q74KU4"/>
<dbReference type="KEGG" id="ljo:LJ_0483"/>
<dbReference type="eggNOG" id="COG0127">
    <property type="taxonomic scope" value="Bacteria"/>
</dbReference>
<dbReference type="HOGENOM" id="CLU_082080_0_2_9"/>
<dbReference type="Proteomes" id="UP000000581">
    <property type="component" value="Chromosome"/>
</dbReference>
<dbReference type="GO" id="GO:0005829">
    <property type="term" value="C:cytosol"/>
    <property type="evidence" value="ECO:0007669"/>
    <property type="project" value="TreeGrafter"/>
</dbReference>
<dbReference type="GO" id="GO:0035870">
    <property type="term" value="F:dITP diphosphatase activity"/>
    <property type="evidence" value="ECO:0007669"/>
    <property type="project" value="RHEA"/>
</dbReference>
<dbReference type="GO" id="GO:0036220">
    <property type="term" value="F:ITP diphosphatase activity"/>
    <property type="evidence" value="ECO:0007669"/>
    <property type="project" value="UniProtKB-EC"/>
</dbReference>
<dbReference type="GO" id="GO:0046872">
    <property type="term" value="F:metal ion binding"/>
    <property type="evidence" value="ECO:0007669"/>
    <property type="project" value="UniProtKB-KW"/>
</dbReference>
<dbReference type="GO" id="GO:0000166">
    <property type="term" value="F:nucleotide binding"/>
    <property type="evidence" value="ECO:0007669"/>
    <property type="project" value="UniProtKB-KW"/>
</dbReference>
<dbReference type="GO" id="GO:0017111">
    <property type="term" value="F:ribonucleoside triphosphate phosphatase activity"/>
    <property type="evidence" value="ECO:0007669"/>
    <property type="project" value="InterPro"/>
</dbReference>
<dbReference type="GO" id="GO:0036222">
    <property type="term" value="F:XTP diphosphatase activity"/>
    <property type="evidence" value="ECO:0007669"/>
    <property type="project" value="RHEA"/>
</dbReference>
<dbReference type="GO" id="GO:0009117">
    <property type="term" value="P:nucleotide metabolic process"/>
    <property type="evidence" value="ECO:0007669"/>
    <property type="project" value="UniProtKB-KW"/>
</dbReference>
<dbReference type="GO" id="GO:0009146">
    <property type="term" value="P:purine nucleoside triphosphate catabolic process"/>
    <property type="evidence" value="ECO:0007669"/>
    <property type="project" value="UniProtKB-UniRule"/>
</dbReference>
<dbReference type="CDD" id="cd00515">
    <property type="entry name" value="HAM1"/>
    <property type="match status" value="1"/>
</dbReference>
<dbReference type="FunFam" id="3.90.950.10:FF:000001">
    <property type="entry name" value="dITP/XTP pyrophosphatase"/>
    <property type="match status" value="1"/>
</dbReference>
<dbReference type="Gene3D" id="3.90.950.10">
    <property type="match status" value="1"/>
</dbReference>
<dbReference type="HAMAP" id="MF_01405">
    <property type="entry name" value="Non_canon_purine_NTPase"/>
    <property type="match status" value="1"/>
</dbReference>
<dbReference type="InterPro" id="IPR020922">
    <property type="entry name" value="dITP/XTP_pyrophosphatase"/>
</dbReference>
<dbReference type="InterPro" id="IPR029001">
    <property type="entry name" value="ITPase-like_fam"/>
</dbReference>
<dbReference type="InterPro" id="IPR002637">
    <property type="entry name" value="RdgB/HAM1"/>
</dbReference>
<dbReference type="NCBIfam" id="NF011397">
    <property type="entry name" value="PRK14822.1"/>
    <property type="match status" value="1"/>
</dbReference>
<dbReference type="NCBIfam" id="TIGR00042">
    <property type="entry name" value="RdgB/HAM1 family non-canonical purine NTP pyrophosphatase"/>
    <property type="match status" value="1"/>
</dbReference>
<dbReference type="PANTHER" id="PTHR11067:SF9">
    <property type="entry name" value="INOSINE TRIPHOSPHATE PYROPHOSPHATASE"/>
    <property type="match status" value="1"/>
</dbReference>
<dbReference type="PANTHER" id="PTHR11067">
    <property type="entry name" value="INOSINE TRIPHOSPHATE PYROPHOSPHATASE/HAM1 PROTEIN"/>
    <property type="match status" value="1"/>
</dbReference>
<dbReference type="Pfam" id="PF01725">
    <property type="entry name" value="Ham1p_like"/>
    <property type="match status" value="1"/>
</dbReference>
<dbReference type="SUPFAM" id="SSF52972">
    <property type="entry name" value="ITPase-like"/>
    <property type="match status" value="1"/>
</dbReference>
<reference key="1">
    <citation type="journal article" date="2004" name="Proc. Natl. Acad. Sci. U.S.A.">
        <title>The genome sequence of the probiotic intestinal bacterium Lactobacillus johnsonii NCC 533.</title>
        <authorList>
            <person name="Pridmore R.D."/>
            <person name="Berger B."/>
            <person name="Desiere F."/>
            <person name="Vilanova D."/>
            <person name="Barretto C."/>
            <person name="Pittet A.-C."/>
            <person name="Zwahlen M.-C."/>
            <person name="Rouvet M."/>
            <person name="Altermann E."/>
            <person name="Barrangou R."/>
            <person name="Mollet B."/>
            <person name="Mercenier A."/>
            <person name="Klaenhammer T."/>
            <person name="Arigoni F."/>
            <person name="Schell M.A."/>
        </authorList>
    </citation>
    <scope>NUCLEOTIDE SEQUENCE [LARGE SCALE GENOMIC DNA]</scope>
    <source>
        <strain>CNCM I-1225 / La1 / NCC 533</strain>
    </source>
</reference>